<sequence>MTDQSHQCVIIGIAGASASGKSLIASTLYRELREQVGDEHIGVIPEDSYYKDQSHLSMEERVKTNYDHPNAMDHSLLFQHLQALKRGSAIELPVYSYVEHTRMQETVRVEPKKVIILEGILLLTDARLREEMNFSIFVDTPLDICLMRRIKRDVNERGRSMDSVMAQYQKTVRPMFLQFIEPSKQYADIIVPRGGKNRIAIDILKAKISQFFE</sequence>
<gene>
    <name evidence="1" type="primary">udk</name>
    <name type="ordered locus">SeD_A2463</name>
</gene>
<name>URK_SALDC</name>
<feature type="chain" id="PRO_1000129082" description="Uridine kinase">
    <location>
        <begin position="1"/>
        <end position="213"/>
    </location>
</feature>
<feature type="binding site" evidence="1">
    <location>
        <begin position="15"/>
        <end position="22"/>
    </location>
    <ligand>
        <name>ATP</name>
        <dbReference type="ChEBI" id="CHEBI:30616"/>
    </ligand>
</feature>
<protein>
    <recommendedName>
        <fullName evidence="1">Uridine kinase</fullName>
        <ecNumber evidence="1">2.7.1.48</ecNumber>
    </recommendedName>
    <alternativeName>
        <fullName evidence="1">Cytidine monophosphokinase</fullName>
    </alternativeName>
    <alternativeName>
        <fullName evidence="1">Uridine monophosphokinase</fullName>
    </alternativeName>
</protein>
<proteinExistence type="inferred from homology"/>
<dbReference type="EC" id="2.7.1.48" evidence="1"/>
<dbReference type="EMBL" id="CP001144">
    <property type="protein sequence ID" value="ACH77029.1"/>
    <property type="molecule type" value="Genomic_DNA"/>
</dbReference>
<dbReference type="RefSeq" id="WP_000132082.1">
    <property type="nucleotide sequence ID" value="NC_011205.1"/>
</dbReference>
<dbReference type="SMR" id="B5FMU1"/>
<dbReference type="GeneID" id="66756602"/>
<dbReference type="KEGG" id="sed:SeD_A2463"/>
<dbReference type="HOGENOM" id="CLU_021278_1_2_6"/>
<dbReference type="UniPathway" id="UPA00574">
    <property type="reaction ID" value="UER00637"/>
</dbReference>
<dbReference type="UniPathway" id="UPA00579">
    <property type="reaction ID" value="UER00640"/>
</dbReference>
<dbReference type="Proteomes" id="UP000008322">
    <property type="component" value="Chromosome"/>
</dbReference>
<dbReference type="GO" id="GO:0005737">
    <property type="term" value="C:cytoplasm"/>
    <property type="evidence" value="ECO:0007669"/>
    <property type="project" value="UniProtKB-SubCell"/>
</dbReference>
<dbReference type="GO" id="GO:0005524">
    <property type="term" value="F:ATP binding"/>
    <property type="evidence" value="ECO:0007669"/>
    <property type="project" value="UniProtKB-UniRule"/>
</dbReference>
<dbReference type="GO" id="GO:0043771">
    <property type="term" value="F:cytidine kinase activity"/>
    <property type="evidence" value="ECO:0007669"/>
    <property type="project" value="RHEA"/>
</dbReference>
<dbReference type="GO" id="GO:0004849">
    <property type="term" value="F:uridine kinase activity"/>
    <property type="evidence" value="ECO:0007669"/>
    <property type="project" value="UniProtKB-UniRule"/>
</dbReference>
<dbReference type="GO" id="GO:0044211">
    <property type="term" value="P:CTP salvage"/>
    <property type="evidence" value="ECO:0007669"/>
    <property type="project" value="UniProtKB-UniRule"/>
</dbReference>
<dbReference type="GO" id="GO:0044206">
    <property type="term" value="P:UMP salvage"/>
    <property type="evidence" value="ECO:0007669"/>
    <property type="project" value="UniProtKB-UniRule"/>
</dbReference>
<dbReference type="CDD" id="cd02023">
    <property type="entry name" value="UMPK"/>
    <property type="match status" value="1"/>
</dbReference>
<dbReference type="FunFam" id="3.40.50.300:FF:000252">
    <property type="entry name" value="Uridine kinase"/>
    <property type="match status" value="1"/>
</dbReference>
<dbReference type="Gene3D" id="3.40.50.300">
    <property type="entry name" value="P-loop containing nucleotide triphosphate hydrolases"/>
    <property type="match status" value="1"/>
</dbReference>
<dbReference type="HAMAP" id="MF_00551">
    <property type="entry name" value="Uridine_kinase"/>
    <property type="match status" value="1"/>
</dbReference>
<dbReference type="InterPro" id="IPR027417">
    <property type="entry name" value="P-loop_NTPase"/>
</dbReference>
<dbReference type="InterPro" id="IPR006083">
    <property type="entry name" value="PRK/URK"/>
</dbReference>
<dbReference type="InterPro" id="IPR026008">
    <property type="entry name" value="Uridine_kinase"/>
</dbReference>
<dbReference type="InterPro" id="IPR000764">
    <property type="entry name" value="Uridine_kinase-like"/>
</dbReference>
<dbReference type="NCBIfam" id="NF004018">
    <property type="entry name" value="PRK05480.1"/>
    <property type="match status" value="1"/>
</dbReference>
<dbReference type="NCBIfam" id="TIGR00235">
    <property type="entry name" value="udk"/>
    <property type="match status" value="1"/>
</dbReference>
<dbReference type="PANTHER" id="PTHR10285">
    <property type="entry name" value="URIDINE KINASE"/>
    <property type="match status" value="1"/>
</dbReference>
<dbReference type="Pfam" id="PF00485">
    <property type="entry name" value="PRK"/>
    <property type="match status" value="1"/>
</dbReference>
<dbReference type="PRINTS" id="PR00988">
    <property type="entry name" value="URIDINKINASE"/>
</dbReference>
<dbReference type="SUPFAM" id="SSF52540">
    <property type="entry name" value="P-loop containing nucleoside triphosphate hydrolases"/>
    <property type="match status" value="1"/>
</dbReference>
<reference key="1">
    <citation type="journal article" date="2011" name="J. Bacteriol.">
        <title>Comparative genomics of 28 Salmonella enterica isolates: evidence for CRISPR-mediated adaptive sublineage evolution.</title>
        <authorList>
            <person name="Fricke W.F."/>
            <person name="Mammel M.K."/>
            <person name="McDermott P.F."/>
            <person name="Tartera C."/>
            <person name="White D.G."/>
            <person name="Leclerc J.E."/>
            <person name="Ravel J."/>
            <person name="Cebula T.A."/>
        </authorList>
    </citation>
    <scope>NUCLEOTIDE SEQUENCE [LARGE SCALE GENOMIC DNA]</scope>
    <source>
        <strain>CT_02021853</strain>
    </source>
</reference>
<accession>B5FMU1</accession>
<evidence type="ECO:0000255" key="1">
    <source>
        <dbReference type="HAMAP-Rule" id="MF_00551"/>
    </source>
</evidence>
<organism>
    <name type="scientific">Salmonella dublin (strain CT_02021853)</name>
    <dbReference type="NCBI Taxonomy" id="439851"/>
    <lineage>
        <taxon>Bacteria</taxon>
        <taxon>Pseudomonadati</taxon>
        <taxon>Pseudomonadota</taxon>
        <taxon>Gammaproteobacteria</taxon>
        <taxon>Enterobacterales</taxon>
        <taxon>Enterobacteriaceae</taxon>
        <taxon>Salmonella</taxon>
    </lineage>
</organism>
<comment type="catalytic activity">
    <reaction evidence="1">
        <text>uridine + ATP = UMP + ADP + H(+)</text>
        <dbReference type="Rhea" id="RHEA:16825"/>
        <dbReference type="ChEBI" id="CHEBI:15378"/>
        <dbReference type="ChEBI" id="CHEBI:16704"/>
        <dbReference type="ChEBI" id="CHEBI:30616"/>
        <dbReference type="ChEBI" id="CHEBI:57865"/>
        <dbReference type="ChEBI" id="CHEBI:456216"/>
        <dbReference type="EC" id="2.7.1.48"/>
    </reaction>
</comment>
<comment type="catalytic activity">
    <reaction evidence="1">
        <text>cytidine + ATP = CMP + ADP + H(+)</text>
        <dbReference type="Rhea" id="RHEA:24674"/>
        <dbReference type="ChEBI" id="CHEBI:15378"/>
        <dbReference type="ChEBI" id="CHEBI:17562"/>
        <dbReference type="ChEBI" id="CHEBI:30616"/>
        <dbReference type="ChEBI" id="CHEBI:60377"/>
        <dbReference type="ChEBI" id="CHEBI:456216"/>
        <dbReference type="EC" id="2.7.1.48"/>
    </reaction>
</comment>
<comment type="pathway">
    <text evidence="1">Pyrimidine metabolism; CTP biosynthesis via salvage pathway; CTP from cytidine: step 1/3.</text>
</comment>
<comment type="pathway">
    <text evidence="1">Pyrimidine metabolism; UMP biosynthesis via salvage pathway; UMP from uridine: step 1/1.</text>
</comment>
<comment type="subcellular location">
    <subcellularLocation>
        <location evidence="1">Cytoplasm</location>
    </subcellularLocation>
</comment>
<comment type="similarity">
    <text evidence="1">Belongs to the uridine kinase family.</text>
</comment>
<keyword id="KW-0067">ATP-binding</keyword>
<keyword id="KW-0963">Cytoplasm</keyword>
<keyword id="KW-0418">Kinase</keyword>
<keyword id="KW-0547">Nucleotide-binding</keyword>
<keyword id="KW-0808">Transferase</keyword>